<proteinExistence type="predicted"/>
<reference key="1">
    <citation type="journal article" date="2005" name="Nature">
        <title>The genome of the social amoeba Dictyostelium discoideum.</title>
        <authorList>
            <person name="Eichinger L."/>
            <person name="Pachebat J.A."/>
            <person name="Gloeckner G."/>
            <person name="Rajandream M.A."/>
            <person name="Sucgang R."/>
            <person name="Berriman M."/>
            <person name="Song J."/>
            <person name="Olsen R."/>
            <person name="Szafranski K."/>
            <person name="Xu Q."/>
            <person name="Tunggal B."/>
            <person name="Kummerfeld S."/>
            <person name="Madera M."/>
            <person name="Konfortov B.A."/>
            <person name="Rivero F."/>
            <person name="Bankier A.T."/>
            <person name="Lehmann R."/>
            <person name="Hamlin N."/>
            <person name="Davies R."/>
            <person name="Gaudet P."/>
            <person name="Fey P."/>
            <person name="Pilcher K."/>
            <person name="Chen G."/>
            <person name="Saunders D."/>
            <person name="Sodergren E.J."/>
            <person name="Davis P."/>
            <person name="Kerhornou A."/>
            <person name="Nie X."/>
            <person name="Hall N."/>
            <person name="Anjard C."/>
            <person name="Hemphill L."/>
            <person name="Bason N."/>
            <person name="Farbrother P."/>
            <person name="Desany B."/>
            <person name="Just E."/>
            <person name="Morio T."/>
            <person name="Rost R."/>
            <person name="Churcher C.M."/>
            <person name="Cooper J."/>
            <person name="Haydock S."/>
            <person name="van Driessche N."/>
            <person name="Cronin A."/>
            <person name="Goodhead I."/>
            <person name="Muzny D.M."/>
            <person name="Mourier T."/>
            <person name="Pain A."/>
            <person name="Lu M."/>
            <person name="Harper D."/>
            <person name="Lindsay R."/>
            <person name="Hauser H."/>
            <person name="James K.D."/>
            <person name="Quiles M."/>
            <person name="Madan Babu M."/>
            <person name="Saito T."/>
            <person name="Buchrieser C."/>
            <person name="Wardroper A."/>
            <person name="Felder M."/>
            <person name="Thangavelu M."/>
            <person name="Johnson D."/>
            <person name="Knights A."/>
            <person name="Loulseged H."/>
            <person name="Mungall K.L."/>
            <person name="Oliver K."/>
            <person name="Price C."/>
            <person name="Quail M.A."/>
            <person name="Urushihara H."/>
            <person name="Hernandez J."/>
            <person name="Rabbinowitsch E."/>
            <person name="Steffen D."/>
            <person name="Sanders M."/>
            <person name="Ma J."/>
            <person name="Kohara Y."/>
            <person name="Sharp S."/>
            <person name="Simmonds M.N."/>
            <person name="Spiegler S."/>
            <person name="Tivey A."/>
            <person name="Sugano S."/>
            <person name="White B."/>
            <person name="Walker D."/>
            <person name="Woodward J.R."/>
            <person name="Winckler T."/>
            <person name="Tanaka Y."/>
            <person name="Shaulsky G."/>
            <person name="Schleicher M."/>
            <person name="Weinstock G.M."/>
            <person name="Rosenthal A."/>
            <person name="Cox E.C."/>
            <person name="Chisholm R.L."/>
            <person name="Gibbs R.A."/>
            <person name="Loomis W.F."/>
            <person name="Platzer M."/>
            <person name="Kay R.R."/>
            <person name="Williams J.G."/>
            <person name="Dear P.H."/>
            <person name="Noegel A.A."/>
            <person name="Barrell B.G."/>
            <person name="Kuspa A."/>
        </authorList>
    </citation>
    <scope>NUCLEOTIDE SEQUENCE [LARGE SCALE GENOMIC DNA]</scope>
    <source>
        <strain>AX4</strain>
    </source>
</reference>
<sequence>MDQLISQLNFKSHNSIIHSVDSIGDDTCYVLDLSVTPNLLAAAGSNYLIKIYDRSNNTILNVLSGHKDAINETKFIENTNTLLSCSSDKTVKIWDTKTGQCSQTINQQGEIFSIDLNGDILAMGVGSMVVLYNLSTKKMIRKFDCSHTEDVTRVRFHPIDKNKLVSCSVDGLICMYDLEQADDDDAIVHVINAEDSIGNIGFFGSAYQYLYTLSHTERLATWDLTTGLKIKHYGADLRSTLSDRYKFEINYFISCIYDNASNQLILFGGDFNGTGHVFLVTPDEVIQISKLENVHTDVIRNVFWDKFKSELITSSEDSKIGFWTNNPSITNILKINNDTSSNKMKDDKLKSKKTSPYNK</sequence>
<protein>
    <recommendedName>
        <fullName>WD repeat-containing protein 89 homolog</fullName>
    </recommendedName>
</protein>
<gene>
    <name type="primary">wdr89</name>
    <name type="ORF">DDB_G0283635</name>
</gene>
<dbReference type="EMBL" id="AAFI02000056">
    <property type="protein sequence ID" value="EAL65584.1"/>
    <property type="molecule type" value="Genomic_DNA"/>
</dbReference>
<dbReference type="RefSeq" id="XP_638928.1">
    <property type="nucleotide sequence ID" value="XM_633836.1"/>
</dbReference>
<dbReference type="SMR" id="Q54QU5"/>
<dbReference type="FunCoup" id="Q54QU5">
    <property type="interactions" value="235"/>
</dbReference>
<dbReference type="STRING" id="44689.Q54QU5"/>
<dbReference type="PaxDb" id="44689-DDB0267166"/>
<dbReference type="EnsemblProtists" id="EAL65584">
    <property type="protein sequence ID" value="EAL65584"/>
    <property type="gene ID" value="DDB_G0283635"/>
</dbReference>
<dbReference type="GeneID" id="8624167"/>
<dbReference type="KEGG" id="ddi:DDB_G0283635"/>
<dbReference type="dictyBase" id="DDB_G0283635">
    <property type="gene designation" value="wdr89"/>
</dbReference>
<dbReference type="VEuPathDB" id="AmoebaDB:DDB_G0283635"/>
<dbReference type="eggNOG" id="KOG1188">
    <property type="taxonomic scope" value="Eukaryota"/>
</dbReference>
<dbReference type="HOGENOM" id="CLU_037323_4_0_1"/>
<dbReference type="InParanoid" id="Q54QU5"/>
<dbReference type="OMA" id="NDGPVAF"/>
<dbReference type="PhylomeDB" id="Q54QU5"/>
<dbReference type="PRO" id="PR:Q54QU5"/>
<dbReference type="Proteomes" id="UP000002195">
    <property type="component" value="Chromosome 4"/>
</dbReference>
<dbReference type="Gene3D" id="2.130.10.10">
    <property type="entry name" value="YVTN repeat-like/Quinoprotein amine dehydrogenase"/>
    <property type="match status" value="2"/>
</dbReference>
<dbReference type="InterPro" id="IPR015943">
    <property type="entry name" value="WD40/YVTN_repeat-like_dom_sf"/>
</dbReference>
<dbReference type="InterPro" id="IPR019775">
    <property type="entry name" value="WD40_repeat_CS"/>
</dbReference>
<dbReference type="InterPro" id="IPR036322">
    <property type="entry name" value="WD40_repeat_dom_sf"/>
</dbReference>
<dbReference type="InterPro" id="IPR001680">
    <property type="entry name" value="WD40_rpt"/>
</dbReference>
<dbReference type="InterPro" id="IPR039328">
    <property type="entry name" value="WDR89"/>
</dbReference>
<dbReference type="PANTHER" id="PTHR22889">
    <property type="entry name" value="WD REPEAT-CONTAINING PROTEIN 89"/>
    <property type="match status" value="1"/>
</dbReference>
<dbReference type="PANTHER" id="PTHR22889:SF0">
    <property type="entry name" value="WD REPEAT-CONTAINING PROTEIN 89"/>
    <property type="match status" value="1"/>
</dbReference>
<dbReference type="Pfam" id="PF00400">
    <property type="entry name" value="WD40"/>
    <property type="match status" value="2"/>
</dbReference>
<dbReference type="SMART" id="SM00320">
    <property type="entry name" value="WD40"/>
    <property type="match status" value="5"/>
</dbReference>
<dbReference type="SUPFAM" id="SSF50978">
    <property type="entry name" value="WD40 repeat-like"/>
    <property type="match status" value="1"/>
</dbReference>
<dbReference type="PROSITE" id="PS00678">
    <property type="entry name" value="WD_REPEATS_1"/>
    <property type="match status" value="1"/>
</dbReference>
<dbReference type="PROSITE" id="PS50082">
    <property type="entry name" value="WD_REPEATS_2"/>
    <property type="match status" value="1"/>
</dbReference>
<dbReference type="PROSITE" id="PS50294">
    <property type="entry name" value="WD_REPEATS_REGION"/>
    <property type="match status" value="1"/>
</dbReference>
<accession>Q54QU5</accession>
<name>WDR89_DICDI</name>
<organism>
    <name type="scientific">Dictyostelium discoideum</name>
    <name type="common">Social amoeba</name>
    <dbReference type="NCBI Taxonomy" id="44689"/>
    <lineage>
        <taxon>Eukaryota</taxon>
        <taxon>Amoebozoa</taxon>
        <taxon>Evosea</taxon>
        <taxon>Eumycetozoa</taxon>
        <taxon>Dictyostelia</taxon>
        <taxon>Dictyosteliales</taxon>
        <taxon>Dictyosteliaceae</taxon>
        <taxon>Dictyostelium</taxon>
    </lineage>
</organism>
<feature type="chain" id="PRO_0000330847" description="WD repeat-containing protein 89 homolog">
    <location>
        <begin position="1"/>
        <end position="359"/>
    </location>
</feature>
<feature type="repeat" description="WD 1">
    <location>
        <begin position="23"/>
        <end position="62"/>
    </location>
</feature>
<feature type="repeat" description="WD 2">
    <location>
        <begin position="65"/>
        <end position="104"/>
    </location>
</feature>
<feature type="repeat" description="WD 3">
    <location>
        <begin position="106"/>
        <end position="144"/>
    </location>
</feature>
<feature type="repeat" description="WD 4">
    <location>
        <begin position="146"/>
        <end position="186"/>
    </location>
</feature>
<feature type="repeat" description="WD 5">
    <location>
        <begin position="192"/>
        <end position="232"/>
    </location>
</feature>
<feature type="repeat" description="WD 6">
    <location>
        <begin position="294"/>
        <end position="333"/>
    </location>
</feature>
<keyword id="KW-1185">Reference proteome</keyword>
<keyword id="KW-0677">Repeat</keyword>
<keyword id="KW-0853">WD repeat</keyword>